<accession>P54707</accession>
<accession>Q13816</accession>
<accession>Q13817</accession>
<accession>Q16734</accession>
<accession>Q5W035</accession>
<accession>Q8N5U2</accession>
<keyword id="KW-0025">Alternative splicing</keyword>
<keyword id="KW-0067">ATP-binding</keyword>
<keyword id="KW-1003">Cell membrane</keyword>
<keyword id="KW-0375">Hydrogen ion transport</keyword>
<keyword id="KW-0406">Ion transport</keyword>
<keyword id="KW-0460">Magnesium</keyword>
<keyword id="KW-0472">Membrane</keyword>
<keyword id="KW-0479">Metal-binding</keyword>
<keyword id="KW-0547">Nucleotide-binding</keyword>
<keyword id="KW-0597">Phosphoprotein</keyword>
<keyword id="KW-0630">Potassium</keyword>
<keyword id="KW-0633">Potassium transport</keyword>
<keyword id="KW-1267">Proteomics identification</keyword>
<keyword id="KW-1185">Reference proteome</keyword>
<keyword id="KW-0915">Sodium</keyword>
<keyword id="KW-0739">Sodium transport</keyword>
<keyword id="KW-1278">Translocase</keyword>
<keyword id="KW-0812">Transmembrane</keyword>
<keyword id="KW-1133">Transmembrane helix</keyword>
<keyword id="KW-0813">Transport</keyword>
<protein>
    <recommendedName>
        <fullName>Potassium-transporting ATPase alpha chain 2</fullName>
    </recommendedName>
    <alternativeName>
        <fullName evidence="3">HK alpha 2</fullName>
    </alternativeName>
    <alternativeName>
        <fullName evidence="15">Non-gastric H(+)/K(+) ATPase subunit alpha</fullName>
        <ecNumber evidence="6 10 11">7.2.2.19</ecNumber>
    </alternativeName>
    <alternativeName>
        <fullName evidence="18">Non-gastric Na(+)/K(+) ATPase subunit alpha</fullName>
        <ecNumber evidence="6 12">7.2.2.13</ecNumber>
    </alternativeName>
    <alternativeName>
        <fullName>Proton pump</fullName>
    </alternativeName>
    <alternativeName>
        <fullName evidence="18">Sodium pump</fullName>
    </alternativeName>
</protein>
<gene>
    <name evidence="16 24" type="primary">ATP12A</name>
    <name evidence="17" type="synonym">ATP1AL1</name>
</gene>
<comment type="function">
    <text evidence="4 6 9 10 11 12">The catalytic subunit of a H(+)/K(+) ATPase and/or Na(+)/K(+) ATPase pump which transports K(+) ions in exchange for Na(+) and/or H(+) ions across the apical membrane of epithelial cells. Uses ATP as an energy source to pump K(+) ions into the cell while transporting Na(+) and/or H(+) ions to the extracellular compartment (PubMed:11341842, PubMed:7485470, PubMed:8853415, PubMed:9774385). Involved in the maintenance of electrolyte homeostasis through K(+) ion absorption in kidney and colon (By similarity). In the airway epithelium, may play a primary role in mucus acidification regulating its viscosity and clearance (PubMed:29391451).</text>
</comment>
<comment type="catalytic activity">
    <reaction evidence="6 10 11">
        <text>K(+)(out) + ATP + H2O + H(+)(in) = K(+)(in) + ADP + phosphate + 2 H(+)(out)</text>
        <dbReference type="Rhea" id="RHEA:22044"/>
        <dbReference type="ChEBI" id="CHEBI:15377"/>
        <dbReference type="ChEBI" id="CHEBI:15378"/>
        <dbReference type="ChEBI" id="CHEBI:29103"/>
        <dbReference type="ChEBI" id="CHEBI:30616"/>
        <dbReference type="ChEBI" id="CHEBI:43474"/>
        <dbReference type="ChEBI" id="CHEBI:456216"/>
        <dbReference type="EC" id="7.2.2.19"/>
    </reaction>
    <physiologicalReaction direction="left-to-right" evidence="20 21 22">
        <dbReference type="Rhea" id="RHEA:22045"/>
    </physiologicalReaction>
</comment>
<comment type="catalytic activity">
    <reaction evidence="6 12">
        <text>K(+)(out) + Na(+)(in) + ATP + H2O = K(+)(in) + Na(+)(out) + ADP + phosphate + H(+)</text>
        <dbReference type="Rhea" id="RHEA:18353"/>
        <dbReference type="ChEBI" id="CHEBI:15377"/>
        <dbReference type="ChEBI" id="CHEBI:15378"/>
        <dbReference type="ChEBI" id="CHEBI:29101"/>
        <dbReference type="ChEBI" id="CHEBI:29103"/>
        <dbReference type="ChEBI" id="CHEBI:30616"/>
        <dbReference type="ChEBI" id="CHEBI:43474"/>
        <dbReference type="ChEBI" id="CHEBI:456216"/>
        <dbReference type="EC" id="7.2.2.13"/>
    </reaction>
    <physiologicalReaction direction="left-to-right" evidence="20 23">
        <dbReference type="Rhea" id="RHEA:18354"/>
    </physiologicalReaction>
</comment>
<comment type="activity regulation">
    <text evidence="6 10 11">The ATPase activity is regulated by monovalent cations and pH. Up-regulated by K(+) ions in a dose-dependent way. Down-regulated by Na(+) ions (PubMed:11341842). Inhibited by Na(+)/K(+)-ATPase inhibitor ouabain and H(+)/K(+)-ATPase inhibitor SCH-28080 with an intermediate sensitivity to completely resistant Na(+)/K(+)-ATPases and highly sensitive H(+)/K(+)-ATPases (PubMed:11341842, PubMed:7485470, PubMed:8853415).</text>
</comment>
<comment type="biophysicochemical properties">
    <phDependence>
        <text evidence="6">Optimum pH is 7.2-7.8.</text>
    </phDependence>
</comment>
<comment type="subunit">
    <text evidence="2 10 11">The ATPase pump is composed of a catalytic alpha subunit and an auxiliary non-catalytic beta subunit. The alpha subunit pairs with the beta subunit of gastric H(+)/K(+) ATPase ATP4B or the beta subunit of Na(+)/K(+) ATPases ATP1B1 and ATP1B3; this interaction is required for the formation of a functionally active pump and its targeting at the plasma membrane.</text>
</comment>
<comment type="subcellular location">
    <subcellularLocation>
        <location evidence="7">Apical cell membrane</location>
        <topology evidence="5">Multi-pass membrane protein</topology>
    </subcellularLocation>
</comment>
<comment type="alternative products">
    <event type="alternative splicing"/>
    <isoform>
        <id>P54707-1</id>
        <name>1</name>
        <sequence type="displayed"/>
    </isoform>
    <isoform>
        <id>P54707-2</id>
        <name>2</name>
        <sequence type="described" ref="VSP_034640"/>
    </isoform>
</comment>
<comment type="tissue specificity">
    <text evidence="8 9 13">Expressed in airway epithelial cells (at protein level) (PubMed:29391451). Found in skin and kidney. Detected in prostate basal cells (at protein level). Expression is increased in benign prostate hyperplasia and tumor tissues (at protein level).</text>
</comment>
<comment type="induction">
    <text evidence="9">Up-regulated by inflammatory cytokine IL13.</text>
</comment>
<comment type="similarity">
    <text evidence="19">Belongs to the cation transport ATPase (P-type) (TC 3.A.3) family. Type IIC subfamily.</text>
</comment>
<feature type="chain" id="PRO_0000046260" description="Potassium-transporting ATPase alpha chain 2">
    <location>
        <begin position="1"/>
        <end position="1039"/>
    </location>
</feature>
<feature type="topological domain" description="Cytoplasmic" evidence="5">
    <location>
        <begin position="1"/>
        <end position="102"/>
    </location>
</feature>
<feature type="transmembrane region" description="Helical" evidence="5">
    <location>
        <begin position="103"/>
        <end position="123"/>
    </location>
</feature>
<feature type="topological domain" description="Lumenal" evidence="5">
    <location>
        <begin position="124"/>
        <end position="146"/>
    </location>
</feature>
<feature type="transmembrane region" description="Helical" evidence="5">
    <location>
        <begin position="147"/>
        <end position="167"/>
    </location>
</feature>
<feature type="topological domain" description="Cytoplasmic" evidence="5">
    <location>
        <begin position="168"/>
        <end position="303"/>
    </location>
</feature>
<feature type="transmembrane region" description="Helical" evidence="5">
    <location>
        <begin position="304"/>
        <end position="323"/>
    </location>
</feature>
<feature type="topological domain" description="Lumenal" evidence="5">
    <location>
        <begin position="324"/>
        <end position="335"/>
    </location>
</feature>
<feature type="transmembrane region" description="Helical" evidence="5">
    <location>
        <begin position="336"/>
        <end position="353"/>
    </location>
</feature>
<feature type="topological domain" description="Cytoplasmic" evidence="5">
    <location>
        <begin position="354"/>
        <end position="787"/>
    </location>
</feature>
<feature type="transmembrane region" description="Helical" evidence="5">
    <location>
        <begin position="788"/>
        <end position="807"/>
    </location>
</feature>
<feature type="topological domain" description="Lumenal" evidence="5">
    <location>
        <begin position="808"/>
        <end position="817"/>
    </location>
</feature>
<feature type="transmembrane region" description="Helical" evidence="5">
    <location>
        <begin position="818"/>
        <end position="838"/>
    </location>
</feature>
<feature type="topological domain" description="Cytoplasmic" evidence="5">
    <location>
        <begin position="839"/>
        <end position="858"/>
    </location>
</feature>
<feature type="transmembrane region" description="Helical" evidence="5">
    <location>
        <begin position="859"/>
        <end position="881"/>
    </location>
</feature>
<feature type="topological domain" description="Lumenal" evidence="5">
    <location>
        <begin position="882"/>
        <end position="933"/>
    </location>
</feature>
<feature type="transmembrane region" description="Helical" evidence="5">
    <location>
        <begin position="934"/>
        <end position="953"/>
    </location>
</feature>
<feature type="topological domain" description="Cytoplasmic" evidence="5">
    <location>
        <begin position="954"/>
        <end position="967"/>
    </location>
</feature>
<feature type="transmembrane region" description="Helical" evidence="5">
    <location>
        <begin position="968"/>
        <end position="986"/>
    </location>
</feature>
<feature type="topological domain" description="Lumenal" evidence="5">
    <location>
        <begin position="987"/>
        <end position="1001"/>
    </location>
</feature>
<feature type="transmembrane region" description="Helical" evidence="5">
    <location>
        <begin position="1002"/>
        <end position="1022"/>
    </location>
</feature>
<feature type="topological domain" description="Cytoplasmic" evidence="5">
    <location>
        <begin position="1023"/>
        <end position="1039"/>
    </location>
</feature>
<feature type="active site" description="4-aspartylphosphate intermediate" evidence="1">
    <location>
        <position position="391"/>
    </location>
</feature>
<feature type="binding site" evidence="1">
    <location>
        <position position="732"/>
    </location>
    <ligand>
        <name>Mg(2+)</name>
        <dbReference type="ChEBI" id="CHEBI:18420"/>
    </ligand>
</feature>
<feature type="binding site" evidence="1">
    <location>
        <position position="736"/>
    </location>
    <ligand>
        <name>Mg(2+)</name>
        <dbReference type="ChEBI" id="CHEBI:18420"/>
    </ligand>
</feature>
<feature type="modified residue" description="Phosphoserine; by PKA" evidence="1">
    <location>
        <position position="958"/>
    </location>
</feature>
<feature type="splice variant" id="VSP_034640" description="In isoform 2." evidence="14">
    <original>E</original>
    <variation>EASTSPV</variation>
    <location>
        <position position="266"/>
    </location>
</feature>
<feature type="sequence variant" id="VAR_020186" description="In dbSNP:rs2289909.">
    <original>P</original>
    <variation>L</variation>
    <location>
        <position position="863"/>
    </location>
</feature>
<feature type="mutagenesis site" description="Abolishes targeting to the apical plasma membrane." evidence="7">
    <original>K</original>
    <variation>E</variation>
    <location>
        <position position="329"/>
    </location>
</feature>
<feature type="sequence conflict" description="In Ref. 2; AAC37589." evidence="19" ref="2">
    <original>Q</original>
    <variation>QLFQ</variation>
    <location>
        <position position="3"/>
    </location>
</feature>
<feature type="sequence conflict" description="In Ref. 7; CAA49477." evidence="19" ref="7">
    <original>V</original>
    <variation>VRLWGVQV</variation>
    <location>
        <position position="145"/>
    </location>
</feature>
<feature type="sequence conflict" description="In Ref. 7; CAA49477." evidence="19" ref="7">
    <location>
        <begin position="225"/>
        <end position="227"/>
    </location>
</feature>
<feature type="sequence conflict" description="In Ref. 7; CAA49477." evidence="19" ref="7">
    <original>E</original>
    <variation>V</variation>
    <location>
        <position position="266"/>
    </location>
</feature>
<feature type="sequence conflict" description="In Ref. 9; AAA35576." evidence="19" ref="9">
    <original>L</original>
    <variation>P</variation>
    <location>
        <position position="382"/>
    </location>
</feature>
<feature type="sequence conflict" description="In Ref. 7; CAA49478." evidence="19" ref="7">
    <original>DAVV</original>
    <variation>VGGQ</variation>
    <location>
        <begin position="724"/>
        <end position="727"/>
    </location>
</feature>
<feature type="sequence conflict" description="In Ref. 7; CAA49478." evidence="19" ref="7">
    <original>SI</original>
    <variation>LH</variation>
    <location>
        <begin position="772"/>
        <end position="773"/>
    </location>
</feature>
<organism>
    <name type="scientific">Homo sapiens</name>
    <name type="common">Human</name>
    <dbReference type="NCBI Taxonomy" id="9606"/>
    <lineage>
        <taxon>Eukaryota</taxon>
        <taxon>Metazoa</taxon>
        <taxon>Chordata</taxon>
        <taxon>Craniata</taxon>
        <taxon>Vertebrata</taxon>
        <taxon>Euteleostomi</taxon>
        <taxon>Mammalia</taxon>
        <taxon>Eutheria</taxon>
        <taxon>Euarchontoglires</taxon>
        <taxon>Primates</taxon>
        <taxon>Haplorrhini</taxon>
        <taxon>Catarrhini</taxon>
        <taxon>Hominidae</taxon>
        <taxon>Homo</taxon>
    </lineage>
</organism>
<evidence type="ECO:0000250" key="1"/>
<evidence type="ECO:0000250" key="2">
    <source>
        <dbReference type="UniProtKB" id="P54708"/>
    </source>
</evidence>
<evidence type="ECO:0000250" key="3">
    <source>
        <dbReference type="UniProtKB" id="Q9TV52"/>
    </source>
</evidence>
<evidence type="ECO:0000250" key="4">
    <source>
        <dbReference type="UniProtKB" id="Q9Z1W8"/>
    </source>
</evidence>
<evidence type="ECO:0000255" key="5"/>
<evidence type="ECO:0000269" key="6">
    <source>
    </source>
</evidence>
<evidence type="ECO:0000269" key="7">
    <source>
    </source>
</evidence>
<evidence type="ECO:0000269" key="8">
    <source>
    </source>
</evidence>
<evidence type="ECO:0000269" key="9">
    <source>
    </source>
</evidence>
<evidence type="ECO:0000269" key="10">
    <source>
    </source>
</evidence>
<evidence type="ECO:0000269" key="11">
    <source>
    </source>
</evidence>
<evidence type="ECO:0000269" key="12">
    <source>
    </source>
</evidence>
<evidence type="ECO:0000269" key="13">
    <source>
    </source>
</evidence>
<evidence type="ECO:0000303" key="14">
    <source>
    </source>
</evidence>
<evidence type="ECO:0000303" key="15">
    <source>
    </source>
</evidence>
<evidence type="ECO:0000303" key="16">
    <source>
    </source>
</evidence>
<evidence type="ECO:0000303" key="17">
    <source>
    </source>
</evidence>
<evidence type="ECO:0000303" key="18">
    <source>
    </source>
</evidence>
<evidence type="ECO:0000305" key="19"/>
<evidence type="ECO:0000305" key="20">
    <source>
    </source>
</evidence>
<evidence type="ECO:0000305" key="21">
    <source>
    </source>
</evidence>
<evidence type="ECO:0000305" key="22">
    <source>
    </source>
</evidence>
<evidence type="ECO:0000305" key="23">
    <source>
    </source>
</evidence>
<evidence type="ECO:0000312" key="24">
    <source>
        <dbReference type="HGNC" id="HGNC:13816"/>
    </source>
</evidence>
<dbReference type="EC" id="7.2.2.19" evidence="6 10 11"/>
<dbReference type="EC" id="7.2.2.13" evidence="6 12"/>
<dbReference type="EMBL" id="U02076">
    <property type="protein sequence ID" value="AAB37755.1"/>
    <property type="molecule type" value="mRNA"/>
</dbReference>
<dbReference type="EMBL" id="L42563">
    <property type="protein sequence ID" value="AAC37589.2"/>
    <property type="molecule type" value="Genomic_DNA"/>
</dbReference>
<dbReference type="EMBL" id="L42558">
    <property type="protein sequence ID" value="AAC37589.2"/>
    <property type="status" value="JOINED"/>
    <property type="molecule type" value="Genomic_DNA"/>
</dbReference>
<dbReference type="EMBL" id="L42559">
    <property type="protein sequence ID" value="AAC37589.2"/>
    <property type="status" value="JOINED"/>
    <property type="molecule type" value="Genomic_DNA"/>
</dbReference>
<dbReference type="EMBL" id="L42565">
    <property type="protein sequence ID" value="AAC37589.2"/>
    <property type="status" value="JOINED"/>
    <property type="molecule type" value="Genomic_DNA"/>
</dbReference>
<dbReference type="EMBL" id="L42566">
    <property type="protein sequence ID" value="AAC37589.2"/>
    <property type="status" value="JOINED"/>
    <property type="molecule type" value="Genomic_DNA"/>
</dbReference>
<dbReference type="EMBL" id="L42567">
    <property type="protein sequence ID" value="AAC37589.2"/>
    <property type="status" value="JOINED"/>
    <property type="molecule type" value="Genomic_DNA"/>
</dbReference>
<dbReference type="EMBL" id="L42560">
    <property type="protein sequence ID" value="AAC37589.2"/>
    <property type="status" value="JOINED"/>
    <property type="molecule type" value="Genomic_DNA"/>
</dbReference>
<dbReference type="EMBL" id="L42561">
    <property type="protein sequence ID" value="AAC37589.2"/>
    <property type="status" value="JOINED"/>
    <property type="molecule type" value="Genomic_DNA"/>
</dbReference>
<dbReference type="EMBL" id="L42568">
    <property type="protein sequence ID" value="AAC37589.2"/>
    <property type="status" value="JOINED"/>
    <property type="molecule type" value="Genomic_DNA"/>
</dbReference>
<dbReference type="EMBL" id="L42562">
    <property type="protein sequence ID" value="AAC37589.2"/>
    <property type="status" value="JOINED"/>
    <property type="molecule type" value="Genomic_DNA"/>
</dbReference>
<dbReference type="EMBL" id="L42569">
    <property type="protein sequence ID" value="AAC37589.2"/>
    <property type="status" value="JOINED"/>
    <property type="molecule type" value="Genomic_DNA"/>
</dbReference>
<dbReference type="EMBL" id="AK292968">
    <property type="protein sequence ID" value="BAF85657.1"/>
    <property type="molecule type" value="mRNA"/>
</dbReference>
<dbReference type="EMBL" id="AL157364">
    <property type="status" value="NOT_ANNOTATED_CDS"/>
    <property type="molecule type" value="Genomic_DNA"/>
</dbReference>
<dbReference type="EMBL" id="CH471075">
    <property type="protein sequence ID" value="EAX08346.1"/>
    <property type="molecule type" value="Genomic_DNA"/>
</dbReference>
<dbReference type="EMBL" id="CH471075">
    <property type="protein sequence ID" value="EAX08345.1"/>
    <property type="molecule type" value="Genomic_DNA"/>
</dbReference>
<dbReference type="EMBL" id="BC031609">
    <property type="protein sequence ID" value="AAH31609.1"/>
    <property type="molecule type" value="mRNA"/>
</dbReference>
<dbReference type="EMBL" id="X69823">
    <property type="protein sequence ID" value="CAA49477.1"/>
    <property type="molecule type" value="Genomic_DNA"/>
</dbReference>
<dbReference type="EMBL" id="X69824">
    <property type="protein sequence ID" value="CAA49478.1"/>
    <property type="molecule type" value="Genomic_DNA"/>
</dbReference>
<dbReference type="EMBL" id="M16797">
    <property type="protein sequence ID" value="AAA51802.1"/>
    <property type="molecule type" value="mRNA"/>
</dbReference>
<dbReference type="EMBL" id="M27574">
    <property type="protein sequence ID" value="AAA35576.1"/>
    <property type="molecule type" value="Genomic_DNA"/>
</dbReference>
<dbReference type="CCDS" id="CCDS31948.1">
    <molecule id="P54707-1"/>
</dbReference>
<dbReference type="CCDS" id="CCDS53858.1">
    <molecule id="P54707-2"/>
</dbReference>
<dbReference type="PIR" id="A26641">
    <property type="entry name" value="A26641"/>
</dbReference>
<dbReference type="PIR" id="D27795">
    <property type="entry name" value="D27795"/>
</dbReference>
<dbReference type="PIR" id="E27397">
    <property type="entry name" value="E27397"/>
</dbReference>
<dbReference type="PIR" id="I38401">
    <property type="entry name" value="I38401"/>
</dbReference>
<dbReference type="PIR" id="S13028">
    <property type="entry name" value="S13028"/>
</dbReference>
<dbReference type="PIR" id="S31504">
    <property type="entry name" value="S31504"/>
</dbReference>
<dbReference type="RefSeq" id="NP_001172014.1">
    <molecule id="P54707-2"/>
    <property type="nucleotide sequence ID" value="NM_001185085.2"/>
</dbReference>
<dbReference type="RefSeq" id="NP_001667.4">
    <molecule id="P54707-1"/>
    <property type="nucleotide sequence ID" value="NM_001676.5"/>
</dbReference>
<dbReference type="SMR" id="P54707"/>
<dbReference type="BioGRID" id="106969">
    <property type="interactions" value="218"/>
</dbReference>
<dbReference type="FunCoup" id="P54707">
    <property type="interactions" value="982"/>
</dbReference>
<dbReference type="IntAct" id="P54707">
    <property type="interactions" value="174"/>
</dbReference>
<dbReference type="STRING" id="9606.ENSP00000218548"/>
<dbReference type="BindingDB" id="P54707"/>
<dbReference type="ChEMBL" id="CHEMBL2933"/>
<dbReference type="TCDB" id="3.A.3.1.13">
    <property type="family name" value="the p-type atpase (p-atpase) superfamily"/>
</dbReference>
<dbReference type="iPTMnet" id="P54707"/>
<dbReference type="PhosphoSitePlus" id="P54707"/>
<dbReference type="SwissPalm" id="P54707"/>
<dbReference type="BioMuta" id="ATP12A"/>
<dbReference type="DMDM" id="212287925"/>
<dbReference type="jPOST" id="P54707"/>
<dbReference type="MassIVE" id="P54707"/>
<dbReference type="PaxDb" id="9606-ENSP00000218548"/>
<dbReference type="PeptideAtlas" id="P54707"/>
<dbReference type="ProteomicsDB" id="56695">
    <molecule id="P54707-1"/>
</dbReference>
<dbReference type="ProteomicsDB" id="56696">
    <molecule id="P54707-2"/>
</dbReference>
<dbReference type="Antibodypedia" id="22475">
    <property type="antibodies" value="137 antibodies from 28 providers"/>
</dbReference>
<dbReference type="DNASU" id="479"/>
<dbReference type="Ensembl" id="ENST00000218548.10">
    <molecule id="P54707-2"/>
    <property type="protein sequence ID" value="ENSP00000218548.6"/>
    <property type="gene ID" value="ENSG00000075673.12"/>
</dbReference>
<dbReference type="Ensembl" id="ENST00000381946.5">
    <molecule id="P54707-1"/>
    <property type="protein sequence ID" value="ENSP00000371372.3"/>
    <property type="gene ID" value="ENSG00000075673.12"/>
</dbReference>
<dbReference type="GeneID" id="479"/>
<dbReference type="KEGG" id="hsa:479"/>
<dbReference type="MANE-Select" id="ENST00000381946.5">
    <property type="protein sequence ID" value="ENSP00000371372.3"/>
    <property type="RefSeq nucleotide sequence ID" value="NM_001676.7"/>
    <property type="RefSeq protein sequence ID" value="NP_001667.4"/>
</dbReference>
<dbReference type="UCSC" id="uc001upp.4">
    <molecule id="P54707-1"/>
    <property type="organism name" value="human"/>
</dbReference>
<dbReference type="AGR" id="HGNC:13816"/>
<dbReference type="CTD" id="479"/>
<dbReference type="DisGeNET" id="479"/>
<dbReference type="GeneCards" id="ATP12A"/>
<dbReference type="HGNC" id="HGNC:13816">
    <property type="gene designation" value="ATP12A"/>
</dbReference>
<dbReference type="HPA" id="ENSG00000075673">
    <property type="expression patterns" value="Group enriched (esophagus, kidney, lymphoid tissue, placenta, skin)"/>
</dbReference>
<dbReference type="MIM" id="182360">
    <property type="type" value="gene"/>
</dbReference>
<dbReference type="neXtProt" id="NX_P54707"/>
<dbReference type="OpenTargets" id="ENSG00000075673"/>
<dbReference type="PharmGKB" id="PA25104"/>
<dbReference type="VEuPathDB" id="HostDB:ENSG00000075673"/>
<dbReference type="eggNOG" id="KOG0203">
    <property type="taxonomic scope" value="Eukaryota"/>
</dbReference>
<dbReference type="GeneTree" id="ENSGT00940000159259"/>
<dbReference type="HOGENOM" id="CLU_002360_4_3_1"/>
<dbReference type="InParanoid" id="P54707"/>
<dbReference type="OMA" id="MFFLYMW"/>
<dbReference type="OrthoDB" id="3352408at2759"/>
<dbReference type="PAN-GO" id="P54707">
    <property type="GO annotations" value="7 GO annotations based on evolutionary models"/>
</dbReference>
<dbReference type="PhylomeDB" id="P54707"/>
<dbReference type="TreeFam" id="TF312838"/>
<dbReference type="BRENDA" id="7.2.2.19">
    <property type="organism ID" value="2681"/>
</dbReference>
<dbReference type="PathwayCommons" id="P54707"/>
<dbReference type="Reactome" id="R-HSA-936837">
    <property type="pathway name" value="Ion transport by P-type ATPases"/>
</dbReference>
<dbReference type="SignaLink" id="P54707"/>
<dbReference type="BioGRID-ORCS" id="479">
    <property type="hits" value="8 hits in 1144 CRISPR screens"/>
</dbReference>
<dbReference type="CD-CODE" id="FB4E32DD">
    <property type="entry name" value="Presynaptic clusters and postsynaptic densities"/>
</dbReference>
<dbReference type="ChiTaRS" id="ATP12A">
    <property type="organism name" value="human"/>
</dbReference>
<dbReference type="GeneWiki" id="ATP12A"/>
<dbReference type="GenomeRNAi" id="479"/>
<dbReference type="Pharos" id="P54707">
    <property type="development level" value="Tchem"/>
</dbReference>
<dbReference type="PRO" id="PR:P54707"/>
<dbReference type="Proteomes" id="UP000005640">
    <property type="component" value="Chromosome 13"/>
</dbReference>
<dbReference type="RNAct" id="P54707">
    <property type="molecule type" value="protein"/>
</dbReference>
<dbReference type="Bgee" id="ENSG00000075673">
    <property type="expression patterns" value="Expressed in trachea and 72 other cell types or tissues"/>
</dbReference>
<dbReference type="GO" id="GO:0015629">
    <property type="term" value="C:actin cytoskeleton"/>
    <property type="evidence" value="ECO:0000314"/>
    <property type="project" value="HPA"/>
</dbReference>
<dbReference type="GO" id="GO:0016324">
    <property type="term" value="C:apical plasma membrane"/>
    <property type="evidence" value="ECO:0000314"/>
    <property type="project" value="UniProtKB"/>
</dbReference>
<dbReference type="GO" id="GO:0016323">
    <property type="term" value="C:basolateral plasma membrane"/>
    <property type="evidence" value="ECO:0007669"/>
    <property type="project" value="Ensembl"/>
</dbReference>
<dbReference type="GO" id="GO:0005829">
    <property type="term" value="C:cytosol"/>
    <property type="evidence" value="ECO:0000314"/>
    <property type="project" value="HPA"/>
</dbReference>
<dbReference type="GO" id="GO:0005886">
    <property type="term" value="C:plasma membrane"/>
    <property type="evidence" value="ECO:0000314"/>
    <property type="project" value="HPA"/>
</dbReference>
<dbReference type="GO" id="GO:0005889">
    <property type="term" value="C:potassium:proton exchanging ATPase complex"/>
    <property type="evidence" value="ECO:0000304"/>
    <property type="project" value="ProtInc"/>
</dbReference>
<dbReference type="GO" id="GO:0005524">
    <property type="term" value="F:ATP binding"/>
    <property type="evidence" value="ECO:0007669"/>
    <property type="project" value="UniProtKB-KW"/>
</dbReference>
<dbReference type="GO" id="GO:0016887">
    <property type="term" value="F:ATP hydrolysis activity"/>
    <property type="evidence" value="ECO:0007669"/>
    <property type="project" value="InterPro"/>
</dbReference>
<dbReference type="GO" id="GO:0046872">
    <property type="term" value="F:metal ion binding"/>
    <property type="evidence" value="ECO:0007669"/>
    <property type="project" value="UniProtKB-KW"/>
</dbReference>
<dbReference type="GO" id="GO:0008900">
    <property type="term" value="F:P-type potassium:proton transporter activity"/>
    <property type="evidence" value="ECO:0000314"/>
    <property type="project" value="UniProtKB"/>
</dbReference>
<dbReference type="GO" id="GO:0005391">
    <property type="term" value="F:P-type sodium:potassium-exchanging transporter activity"/>
    <property type="evidence" value="ECO:0000314"/>
    <property type="project" value="UniProtKB"/>
</dbReference>
<dbReference type="GO" id="GO:0030007">
    <property type="term" value="P:intracellular potassium ion homeostasis"/>
    <property type="evidence" value="ECO:0000318"/>
    <property type="project" value="GO_Central"/>
</dbReference>
<dbReference type="GO" id="GO:0006883">
    <property type="term" value="P:intracellular sodium ion homeostasis"/>
    <property type="evidence" value="ECO:0000318"/>
    <property type="project" value="GO_Central"/>
</dbReference>
<dbReference type="GO" id="GO:1990573">
    <property type="term" value="P:potassium ion import across plasma membrane"/>
    <property type="evidence" value="ECO:0000318"/>
    <property type="project" value="GO_Central"/>
</dbReference>
<dbReference type="GO" id="GO:1902600">
    <property type="term" value="P:proton transmembrane transport"/>
    <property type="evidence" value="ECO:0000318"/>
    <property type="project" value="GO_Central"/>
</dbReference>
<dbReference type="GO" id="GO:0006885">
    <property type="term" value="P:regulation of pH"/>
    <property type="evidence" value="ECO:0007669"/>
    <property type="project" value="Ensembl"/>
</dbReference>
<dbReference type="GO" id="GO:0036376">
    <property type="term" value="P:sodium ion export across plasma membrane"/>
    <property type="evidence" value="ECO:0000318"/>
    <property type="project" value="GO_Central"/>
</dbReference>
<dbReference type="CDD" id="cd02608">
    <property type="entry name" value="P-type_ATPase_Na-K_like"/>
    <property type="match status" value="1"/>
</dbReference>
<dbReference type="FunFam" id="1.20.1110.10:FF:000038">
    <property type="entry name" value="Sodium/potassium-transporting ATPase subunit alpha"/>
    <property type="match status" value="1"/>
</dbReference>
<dbReference type="FunFam" id="2.70.150.10:FF:000003">
    <property type="entry name" value="Sodium/potassium-transporting ATPase subunit alpha"/>
    <property type="match status" value="1"/>
</dbReference>
<dbReference type="FunFam" id="3.40.1110.10:FF:000001">
    <property type="entry name" value="Sodium/potassium-transporting ATPase subunit alpha"/>
    <property type="match status" value="1"/>
</dbReference>
<dbReference type="FunFam" id="3.40.50.1000:FF:000004">
    <property type="entry name" value="Sodium/potassium-transporting ATPase subunit alpha"/>
    <property type="match status" value="1"/>
</dbReference>
<dbReference type="FunFam" id="1.20.1110.10:FF:000095">
    <property type="entry name" value="Sodium/potassium-transporting ATPase subunit alpha-1"/>
    <property type="match status" value="1"/>
</dbReference>
<dbReference type="Gene3D" id="3.40.1110.10">
    <property type="entry name" value="Calcium-transporting ATPase, cytoplasmic domain N"/>
    <property type="match status" value="1"/>
</dbReference>
<dbReference type="Gene3D" id="2.70.150.10">
    <property type="entry name" value="Calcium-transporting ATPase, cytoplasmic transduction domain A"/>
    <property type="match status" value="1"/>
</dbReference>
<dbReference type="Gene3D" id="1.20.1110.10">
    <property type="entry name" value="Calcium-transporting ATPase, transmembrane domain"/>
    <property type="match status" value="1"/>
</dbReference>
<dbReference type="Gene3D" id="3.40.50.1000">
    <property type="entry name" value="HAD superfamily/HAD-like"/>
    <property type="match status" value="1"/>
</dbReference>
<dbReference type="InterPro" id="IPR006068">
    <property type="entry name" value="ATPase_P-typ_cation-transptr_C"/>
</dbReference>
<dbReference type="InterPro" id="IPR004014">
    <property type="entry name" value="ATPase_P-typ_cation-transptr_N"/>
</dbReference>
<dbReference type="InterPro" id="IPR023299">
    <property type="entry name" value="ATPase_P-typ_cyto_dom_N"/>
</dbReference>
<dbReference type="InterPro" id="IPR018303">
    <property type="entry name" value="ATPase_P-typ_P_site"/>
</dbReference>
<dbReference type="InterPro" id="IPR023298">
    <property type="entry name" value="ATPase_P-typ_TM_dom_sf"/>
</dbReference>
<dbReference type="InterPro" id="IPR008250">
    <property type="entry name" value="ATPase_P-typ_transduc_dom_A_sf"/>
</dbReference>
<dbReference type="InterPro" id="IPR050510">
    <property type="entry name" value="Cation_transp_ATPase_P-type"/>
</dbReference>
<dbReference type="InterPro" id="IPR036412">
    <property type="entry name" value="HAD-like_sf"/>
</dbReference>
<dbReference type="InterPro" id="IPR023214">
    <property type="entry name" value="HAD_sf"/>
</dbReference>
<dbReference type="InterPro" id="IPR005775">
    <property type="entry name" value="P-type_ATPase_IIC"/>
</dbReference>
<dbReference type="InterPro" id="IPR001757">
    <property type="entry name" value="P_typ_ATPase"/>
</dbReference>
<dbReference type="InterPro" id="IPR044492">
    <property type="entry name" value="P_typ_ATPase_HD_dom"/>
</dbReference>
<dbReference type="NCBIfam" id="TIGR01106">
    <property type="entry name" value="ATPase-IIC_X-K"/>
    <property type="match status" value="1"/>
</dbReference>
<dbReference type="NCBIfam" id="TIGR01494">
    <property type="entry name" value="ATPase_P-type"/>
    <property type="match status" value="2"/>
</dbReference>
<dbReference type="PANTHER" id="PTHR43294:SF1">
    <property type="entry name" value="POTASSIUM-TRANSPORTING ATPASE ALPHA CHAIN 2"/>
    <property type="match status" value="1"/>
</dbReference>
<dbReference type="PANTHER" id="PTHR43294">
    <property type="entry name" value="SODIUM/POTASSIUM-TRANSPORTING ATPASE SUBUNIT ALPHA"/>
    <property type="match status" value="1"/>
</dbReference>
<dbReference type="Pfam" id="PF13246">
    <property type="entry name" value="Cation_ATPase"/>
    <property type="match status" value="1"/>
</dbReference>
<dbReference type="Pfam" id="PF00689">
    <property type="entry name" value="Cation_ATPase_C"/>
    <property type="match status" value="1"/>
</dbReference>
<dbReference type="Pfam" id="PF00690">
    <property type="entry name" value="Cation_ATPase_N"/>
    <property type="match status" value="1"/>
</dbReference>
<dbReference type="Pfam" id="PF00122">
    <property type="entry name" value="E1-E2_ATPase"/>
    <property type="match status" value="1"/>
</dbReference>
<dbReference type="Pfam" id="PF00702">
    <property type="entry name" value="Hydrolase"/>
    <property type="match status" value="1"/>
</dbReference>
<dbReference type="PRINTS" id="PR00119">
    <property type="entry name" value="CATATPASE"/>
</dbReference>
<dbReference type="PRINTS" id="PR00121">
    <property type="entry name" value="NAKATPASE"/>
</dbReference>
<dbReference type="SFLD" id="SFLDS00003">
    <property type="entry name" value="Haloacid_Dehalogenase"/>
    <property type="match status" value="1"/>
</dbReference>
<dbReference type="SFLD" id="SFLDF00027">
    <property type="entry name" value="p-type_atpase"/>
    <property type="match status" value="1"/>
</dbReference>
<dbReference type="SMART" id="SM00831">
    <property type="entry name" value="Cation_ATPase_N"/>
    <property type="match status" value="1"/>
</dbReference>
<dbReference type="SUPFAM" id="SSF81653">
    <property type="entry name" value="Calcium ATPase, transduction domain A"/>
    <property type="match status" value="1"/>
</dbReference>
<dbReference type="SUPFAM" id="SSF81665">
    <property type="entry name" value="Calcium ATPase, transmembrane domain M"/>
    <property type="match status" value="1"/>
</dbReference>
<dbReference type="SUPFAM" id="SSF56784">
    <property type="entry name" value="HAD-like"/>
    <property type="match status" value="1"/>
</dbReference>
<dbReference type="SUPFAM" id="SSF81660">
    <property type="entry name" value="Metal cation-transporting ATPase, ATP-binding domain N"/>
    <property type="match status" value="1"/>
</dbReference>
<dbReference type="PROSITE" id="PS00154">
    <property type="entry name" value="ATPASE_E1_E2"/>
    <property type="match status" value="1"/>
</dbReference>
<proteinExistence type="evidence at protein level"/>
<reference key="1">
    <citation type="journal article" date="1994" name="FEBS Lett.">
        <title>Cloning and characterization of the entire cDNA encoded by ATP1AL1 -- a member of the human Na,K/H,K-ATPase gene family.</title>
        <authorList>
            <person name="Grishin A.V."/>
            <person name="Sverdlov V.E."/>
            <person name="Kostina M.B."/>
            <person name="Modyanov N.N."/>
        </authorList>
    </citation>
    <scope>NUCLEOTIDE SEQUENCE [MRNA] (ISOFORM 1)</scope>
    <source>
        <tissue>Kidney</tissue>
        <tissue>Skin</tissue>
    </source>
</reference>
<reference key="2">
    <citation type="journal article" date="1996" name="Genomics">
        <title>Genomic organization of the human ATP1AL1 gene encoding a ouabain-sensitive H,K-ATPase.</title>
        <authorList>
            <person name="Sverdlov V.E."/>
            <person name="Kostina M.B."/>
            <person name="Modyanov N.N."/>
        </authorList>
    </citation>
    <scope>NUCLEOTIDE SEQUENCE [GENOMIC DNA]</scope>
</reference>
<reference key="3">
    <citation type="journal article" date="2004" name="Nat. Genet.">
        <title>Complete sequencing and characterization of 21,243 full-length human cDNAs.</title>
        <authorList>
            <person name="Ota T."/>
            <person name="Suzuki Y."/>
            <person name="Nishikawa T."/>
            <person name="Otsuki T."/>
            <person name="Sugiyama T."/>
            <person name="Irie R."/>
            <person name="Wakamatsu A."/>
            <person name="Hayashi K."/>
            <person name="Sato H."/>
            <person name="Nagai K."/>
            <person name="Kimura K."/>
            <person name="Makita H."/>
            <person name="Sekine M."/>
            <person name="Obayashi M."/>
            <person name="Nishi T."/>
            <person name="Shibahara T."/>
            <person name="Tanaka T."/>
            <person name="Ishii S."/>
            <person name="Yamamoto J."/>
            <person name="Saito K."/>
            <person name="Kawai Y."/>
            <person name="Isono Y."/>
            <person name="Nakamura Y."/>
            <person name="Nagahari K."/>
            <person name="Murakami K."/>
            <person name="Yasuda T."/>
            <person name="Iwayanagi T."/>
            <person name="Wagatsuma M."/>
            <person name="Shiratori A."/>
            <person name="Sudo H."/>
            <person name="Hosoiri T."/>
            <person name="Kaku Y."/>
            <person name="Kodaira H."/>
            <person name="Kondo H."/>
            <person name="Sugawara M."/>
            <person name="Takahashi M."/>
            <person name="Kanda K."/>
            <person name="Yokoi T."/>
            <person name="Furuya T."/>
            <person name="Kikkawa E."/>
            <person name="Omura Y."/>
            <person name="Abe K."/>
            <person name="Kamihara K."/>
            <person name="Katsuta N."/>
            <person name="Sato K."/>
            <person name="Tanikawa M."/>
            <person name="Yamazaki M."/>
            <person name="Ninomiya K."/>
            <person name="Ishibashi T."/>
            <person name="Yamashita H."/>
            <person name="Murakawa K."/>
            <person name="Fujimori K."/>
            <person name="Tanai H."/>
            <person name="Kimata M."/>
            <person name="Watanabe M."/>
            <person name="Hiraoka S."/>
            <person name="Chiba Y."/>
            <person name="Ishida S."/>
            <person name="Ono Y."/>
            <person name="Takiguchi S."/>
            <person name="Watanabe S."/>
            <person name="Yosida M."/>
            <person name="Hotuta T."/>
            <person name="Kusano J."/>
            <person name="Kanehori K."/>
            <person name="Takahashi-Fujii A."/>
            <person name="Hara H."/>
            <person name="Tanase T.-O."/>
            <person name="Nomura Y."/>
            <person name="Togiya S."/>
            <person name="Komai F."/>
            <person name="Hara R."/>
            <person name="Takeuchi K."/>
            <person name="Arita M."/>
            <person name="Imose N."/>
            <person name="Musashino K."/>
            <person name="Yuuki H."/>
            <person name="Oshima A."/>
            <person name="Sasaki N."/>
            <person name="Aotsuka S."/>
            <person name="Yoshikawa Y."/>
            <person name="Matsunawa H."/>
            <person name="Ichihara T."/>
            <person name="Shiohata N."/>
            <person name="Sano S."/>
            <person name="Moriya S."/>
            <person name="Momiyama H."/>
            <person name="Satoh N."/>
            <person name="Takami S."/>
            <person name="Terashima Y."/>
            <person name="Suzuki O."/>
            <person name="Nakagawa S."/>
            <person name="Senoh A."/>
            <person name="Mizoguchi H."/>
            <person name="Goto Y."/>
            <person name="Shimizu F."/>
            <person name="Wakebe H."/>
            <person name="Hishigaki H."/>
            <person name="Watanabe T."/>
            <person name="Sugiyama A."/>
            <person name="Takemoto M."/>
            <person name="Kawakami B."/>
            <person name="Yamazaki M."/>
            <person name="Watanabe K."/>
            <person name="Kumagai A."/>
            <person name="Itakura S."/>
            <person name="Fukuzumi Y."/>
            <person name="Fujimori Y."/>
            <person name="Komiyama M."/>
            <person name="Tashiro H."/>
            <person name="Tanigami A."/>
            <person name="Fujiwara T."/>
            <person name="Ono T."/>
            <person name="Yamada K."/>
            <person name="Fujii Y."/>
            <person name="Ozaki K."/>
            <person name="Hirao M."/>
            <person name="Ohmori Y."/>
            <person name="Kawabata A."/>
            <person name="Hikiji T."/>
            <person name="Kobatake N."/>
            <person name="Inagaki H."/>
            <person name="Ikema Y."/>
            <person name="Okamoto S."/>
            <person name="Okitani R."/>
            <person name="Kawakami T."/>
            <person name="Noguchi S."/>
            <person name="Itoh T."/>
            <person name="Shigeta K."/>
            <person name="Senba T."/>
            <person name="Matsumura K."/>
            <person name="Nakajima Y."/>
            <person name="Mizuno T."/>
            <person name="Morinaga M."/>
            <person name="Sasaki M."/>
            <person name="Togashi T."/>
            <person name="Oyama M."/>
            <person name="Hata H."/>
            <person name="Watanabe M."/>
            <person name="Komatsu T."/>
            <person name="Mizushima-Sugano J."/>
            <person name="Satoh T."/>
            <person name="Shirai Y."/>
            <person name="Takahashi Y."/>
            <person name="Nakagawa K."/>
            <person name="Okumura K."/>
            <person name="Nagase T."/>
            <person name="Nomura N."/>
            <person name="Kikuchi H."/>
            <person name="Masuho Y."/>
            <person name="Yamashita R."/>
            <person name="Nakai K."/>
            <person name="Yada T."/>
            <person name="Nakamura Y."/>
            <person name="Ohara O."/>
            <person name="Isogai T."/>
            <person name="Sugano S."/>
        </authorList>
    </citation>
    <scope>NUCLEOTIDE SEQUENCE [LARGE SCALE MRNA] (ISOFORM 1)</scope>
    <source>
        <tissue>Trachea</tissue>
    </source>
</reference>
<reference key="4">
    <citation type="journal article" date="2004" name="Nature">
        <title>The DNA sequence and analysis of human chromosome 13.</title>
        <authorList>
            <person name="Dunham A."/>
            <person name="Matthews L.H."/>
            <person name="Burton J."/>
            <person name="Ashurst J.L."/>
            <person name="Howe K.L."/>
            <person name="Ashcroft K.J."/>
            <person name="Beare D.M."/>
            <person name="Burford D.C."/>
            <person name="Hunt S.E."/>
            <person name="Griffiths-Jones S."/>
            <person name="Jones M.C."/>
            <person name="Keenan S.J."/>
            <person name="Oliver K."/>
            <person name="Scott C.E."/>
            <person name="Ainscough R."/>
            <person name="Almeida J.P."/>
            <person name="Ambrose K.D."/>
            <person name="Andrews D.T."/>
            <person name="Ashwell R.I.S."/>
            <person name="Babbage A.K."/>
            <person name="Bagguley C.L."/>
            <person name="Bailey J."/>
            <person name="Bannerjee R."/>
            <person name="Barlow K.F."/>
            <person name="Bates K."/>
            <person name="Beasley H."/>
            <person name="Bird C.P."/>
            <person name="Bray-Allen S."/>
            <person name="Brown A.J."/>
            <person name="Brown J.Y."/>
            <person name="Burrill W."/>
            <person name="Carder C."/>
            <person name="Carter N.P."/>
            <person name="Chapman J.C."/>
            <person name="Clamp M.E."/>
            <person name="Clark S.Y."/>
            <person name="Clarke G."/>
            <person name="Clee C.M."/>
            <person name="Clegg S.C."/>
            <person name="Cobley V."/>
            <person name="Collins J.E."/>
            <person name="Corby N."/>
            <person name="Coville G.J."/>
            <person name="Deloukas P."/>
            <person name="Dhami P."/>
            <person name="Dunham I."/>
            <person name="Dunn M."/>
            <person name="Earthrowl M.E."/>
            <person name="Ellington A.G."/>
            <person name="Faulkner L."/>
            <person name="Frankish A.G."/>
            <person name="Frankland J."/>
            <person name="French L."/>
            <person name="Garner P."/>
            <person name="Garnett J."/>
            <person name="Gilbert J.G.R."/>
            <person name="Gilson C.J."/>
            <person name="Ghori J."/>
            <person name="Grafham D.V."/>
            <person name="Gribble S.M."/>
            <person name="Griffiths C."/>
            <person name="Hall R.E."/>
            <person name="Hammond S."/>
            <person name="Harley J.L."/>
            <person name="Hart E.A."/>
            <person name="Heath P.D."/>
            <person name="Howden P.J."/>
            <person name="Huckle E.J."/>
            <person name="Hunt P.J."/>
            <person name="Hunt A.R."/>
            <person name="Johnson C."/>
            <person name="Johnson D."/>
            <person name="Kay M."/>
            <person name="Kimberley A.M."/>
            <person name="King A."/>
            <person name="Laird G.K."/>
            <person name="Langford C.J."/>
            <person name="Lawlor S."/>
            <person name="Leongamornlert D.A."/>
            <person name="Lloyd D.M."/>
            <person name="Lloyd C."/>
            <person name="Loveland J.E."/>
            <person name="Lovell J."/>
            <person name="Martin S."/>
            <person name="Mashreghi-Mohammadi M."/>
            <person name="McLaren S.J."/>
            <person name="McMurray A."/>
            <person name="Milne S."/>
            <person name="Moore M.J.F."/>
            <person name="Nickerson T."/>
            <person name="Palmer S.A."/>
            <person name="Pearce A.V."/>
            <person name="Peck A.I."/>
            <person name="Pelan S."/>
            <person name="Phillimore B."/>
            <person name="Porter K.M."/>
            <person name="Rice C.M."/>
            <person name="Searle S."/>
            <person name="Sehra H.K."/>
            <person name="Shownkeen R."/>
            <person name="Skuce C.D."/>
            <person name="Smith M."/>
            <person name="Steward C.A."/>
            <person name="Sycamore N."/>
            <person name="Tester J."/>
            <person name="Thomas D.W."/>
            <person name="Tracey A."/>
            <person name="Tromans A."/>
            <person name="Tubby B."/>
            <person name="Wall M."/>
            <person name="Wallis J.M."/>
            <person name="West A.P."/>
            <person name="Whitehead S.L."/>
            <person name="Willey D.L."/>
            <person name="Wilming L."/>
            <person name="Wray P.W."/>
            <person name="Wright M.W."/>
            <person name="Young L."/>
            <person name="Coulson A."/>
            <person name="Durbin R.M."/>
            <person name="Hubbard T."/>
            <person name="Sulston J.E."/>
            <person name="Beck S."/>
            <person name="Bentley D.R."/>
            <person name="Rogers J."/>
            <person name="Ross M.T."/>
        </authorList>
    </citation>
    <scope>NUCLEOTIDE SEQUENCE [LARGE SCALE GENOMIC DNA]</scope>
</reference>
<reference key="5">
    <citation type="submission" date="2005-07" db="EMBL/GenBank/DDBJ databases">
        <authorList>
            <person name="Mural R.J."/>
            <person name="Istrail S."/>
            <person name="Sutton G.G."/>
            <person name="Florea L."/>
            <person name="Halpern A.L."/>
            <person name="Mobarry C.M."/>
            <person name="Lippert R."/>
            <person name="Walenz B."/>
            <person name="Shatkay H."/>
            <person name="Dew I."/>
            <person name="Miller J.R."/>
            <person name="Flanigan M.J."/>
            <person name="Edwards N.J."/>
            <person name="Bolanos R."/>
            <person name="Fasulo D."/>
            <person name="Halldorsson B.V."/>
            <person name="Hannenhalli S."/>
            <person name="Turner R."/>
            <person name="Yooseph S."/>
            <person name="Lu F."/>
            <person name="Nusskern D.R."/>
            <person name="Shue B.C."/>
            <person name="Zheng X.H."/>
            <person name="Zhong F."/>
            <person name="Delcher A.L."/>
            <person name="Huson D.H."/>
            <person name="Kravitz S.A."/>
            <person name="Mouchard L."/>
            <person name="Reinert K."/>
            <person name="Remington K.A."/>
            <person name="Clark A.G."/>
            <person name="Waterman M.S."/>
            <person name="Eichler E.E."/>
            <person name="Adams M.D."/>
            <person name="Hunkapiller M.W."/>
            <person name="Myers E.W."/>
            <person name="Venter J.C."/>
        </authorList>
    </citation>
    <scope>NUCLEOTIDE SEQUENCE [LARGE SCALE GENOMIC DNA]</scope>
</reference>
<reference key="6">
    <citation type="journal article" date="2004" name="Genome Res.">
        <title>The status, quality, and expansion of the NIH full-length cDNA project: the Mammalian Gene Collection (MGC).</title>
        <authorList>
            <consortium name="The MGC Project Team"/>
        </authorList>
    </citation>
    <scope>NUCLEOTIDE SEQUENCE [LARGE SCALE MRNA] (ISOFORM 2)</scope>
    <source>
        <tissue>Brain</tissue>
    </source>
</reference>
<reference key="7">
    <citation type="journal article" date="1991" name="FEBS Lett.">
        <title>The family of human Na,K-ATPase genes. ATP1AL1 gene is transcriptionally competent and probably encodes the related ion transport ATPase.</title>
        <authorList>
            <person name="Modyanov N.N."/>
            <person name="Petrukhin K.E."/>
            <person name="Sverdlov V.E."/>
            <person name="Grishin A.V."/>
            <person name="Orlova M.Y."/>
            <person name="Kostina M.B."/>
            <person name="Makarevich O.I."/>
            <person name="Broude N.E."/>
            <person name="Monastyrskaya G.S."/>
            <person name="Sverdlov E.D."/>
        </authorList>
    </citation>
    <scope>NUCLEOTIDE SEQUENCE [GENOMIC DNA] OF 77-348 AND 681-780</scope>
</reference>
<reference key="8">
    <citation type="journal article" date="1987" name="Proc. Natl. Acad. Sci. U.S.A.">
        <title>Multiple genes encode the human Na+,K+-ATPase catalytic subunit.</title>
        <authorList>
            <person name="Shull M.M."/>
            <person name="Lingrel J.B."/>
        </authorList>
    </citation>
    <scope>NUCLEOTIDE SEQUENCE [MRNA] OF 183-253</scope>
</reference>
<reference key="9">
    <citation type="journal article" date="1987" name="FEBS Lett.">
        <title>The family of human Na+,K+-ATPase genes. No less than five genes and/or pseudogenes related to the alpha-subunit.</title>
        <authorList>
            <person name="Sverdlov E.D."/>
            <person name="Monastyrskaya G.S."/>
            <person name="Broude N.E."/>
            <person name="Ushkaryov Y.A."/>
            <person name="Allikmets R.L."/>
            <person name="Melkov A.M."/>
            <person name="Smirnov Y.V."/>
            <person name="Malyshev I.V."/>
            <person name="Dulubova I.E."/>
            <person name="Petrukhin K.E."/>
            <person name="Gryshin A.V."/>
            <person name="Kiyatkin N.I."/>
            <person name="Kostina M.B."/>
            <person name="Sverdlov V.E."/>
            <person name="Modyanov N.N."/>
            <person name="Ovchinnikov Y.A."/>
        </authorList>
    </citation>
    <scope>NUCLEOTIDE SEQUENCE [GENOMIC DNA] OF 357-412</scope>
</reference>
<reference key="10">
    <citation type="journal article" date="1995" name="Am. J. Physiol.">
        <title>Human ATP1AL1 gene encodes a ouabain-sensitive H-K-ATPase.</title>
        <authorList>
            <person name="Modyanov N.N."/>
            <person name="Mathews P.M."/>
            <person name="Grishin A.V."/>
            <person name="Beguin P."/>
            <person name="Beggah A.T."/>
            <person name="Rossier B.C."/>
            <person name="Horisberger J.D."/>
            <person name="Geering K."/>
        </authorList>
    </citation>
    <scope>FUNCTION</scope>
    <scope>CATALYTIC ACTIVITY</scope>
    <scope>ACTIVITY REGULATION</scope>
    <scope>SUBUNIT</scope>
</reference>
<reference key="11">
    <citation type="journal article" date="1996" name="Am. J. Physiol.">
        <title>Functional expression of the cDNA encoded by the human ATP1AL1 gene.</title>
        <authorList>
            <person name="Grishin A.V."/>
            <person name="Bevensee M.O."/>
            <person name="Modyanov N.N."/>
            <person name="Rajendran V."/>
            <person name="Boron W.F."/>
            <person name="Caplan M.J."/>
        </authorList>
    </citation>
    <scope>FUNCTION</scope>
    <scope>CATALYTIC ACTIVITY</scope>
    <scope>ACTIVITY REGULATION</scope>
    <scope>SUBUNIT</scope>
</reference>
<reference key="12">
    <citation type="journal article" date="1998" name="FEBS Lett.">
        <title>Ouabain-sensitive H,K-ATPase: tissue-specific expression of the mammalian genes encoding the catalytic alpha subunit.</title>
        <authorList>
            <person name="Pestov N.B."/>
            <person name="Romanova L.G."/>
            <person name="Korneenko T.V."/>
            <person name="Egorov M.V."/>
            <person name="Kostina M.B."/>
            <person name="Sverdlov V.E."/>
            <person name="Askari A."/>
            <person name="Shakhparonov M.I."/>
            <person name="Modyanov N.N."/>
        </authorList>
    </citation>
    <scope>TISSUE SPECIFICITY</scope>
</reference>
<reference key="13">
    <citation type="journal article" date="1998" name="J. Biol. Chem.">
        <title>ATP1AL1, a member of the non-gastric H,K-ATPase family, functions as a sodium pump.</title>
        <authorList>
            <person name="Grishin A.V."/>
            <person name="Caplan M.J."/>
        </authorList>
    </citation>
    <scope>FUNCTION</scope>
    <scope>CATALYTIC ACTIVITY</scope>
</reference>
<reference key="14">
    <citation type="journal article" date="2001" name="Biochemistry">
        <title>Catalytic function of nongastric H,K-ATPase expressed in Sf-21 insect cells.</title>
        <authorList>
            <person name="Adams G."/>
            <person name="Tillekeratne M."/>
            <person name="Yu C."/>
            <person name="Pestov N.B."/>
            <person name="Modyanov N.N."/>
        </authorList>
    </citation>
    <scope>FUNCTION</scope>
    <scope>CATALYTIC ACTIVITY</scope>
    <scope>ACTIVITY REGULATION</scope>
    <scope>BIOPHYSICOCHEMICAL PROPERTIES</scope>
</reference>
<reference key="15">
    <citation type="journal article" date="2006" name="Cell. Physiol. Biochem.">
        <title>An extracellular loop of the human non-gastric H,K-ATPase alpha-subunit is involved in apical plasma membrane polarization.</title>
        <authorList>
            <person name="Lerner M."/>
            <person name="Lemke D."/>
            <person name="Bertram H."/>
            <person name="Schillers H."/>
            <person name="Oberleithner H."/>
            <person name="Caplan M.J."/>
            <person name="Reinhardt J."/>
        </authorList>
    </citation>
    <scope>SUBCELLULAR LOCATION</scope>
    <scope>MUTAGENESIS OF LYS-329</scope>
</reference>
<reference key="16">
    <citation type="journal article" date="2011" name="Cell. Physiol. Biochem.">
        <title>Expression of the non-gastric H+/K+ ATPase ATP12A in normal and pathological human prostate tissue.</title>
        <authorList>
            <person name="Streif D."/>
            <person name="Iglseder E."/>
            <person name="Hauser-Kronberger C."/>
            <person name="Fink K.G."/>
            <person name="Jakab M."/>
            <person name="Ritter M."/>
        </authorList>
    </citation>
    <scope>TISSUE SPECIFICITY</scope>
</reference>
<reference key="17">
    <citation type="journal article" date="2014" name="J. Proteomics">
        <title>An enzyme assisted RP-RPLC approach for in-depth analysis of human liver phosphoproteome.</title>
        <authorList>
            <person name="Bian Y."/>
            <person name="Song C."/>
            <person name="Cheng K."/>
            <person name="Dong M."/>
            <person name="Wang F."/>
            <person name="Huang J."/>
            <person name="Sun D."/>
            <person name="Wang L."/>
            <person name="Ye M."/>
            <person name="Zou H."/>
        </authorList>
    </citation>
    <scope>IDENTIFICATION BY MASS SPECTROMETRY [LARGE SCALE ANALYSIS]</scope>
    <source>
        <tissue>Liver</tissue>
    </source>
</reference>
<reference key="18">
    <citation type="journal article" date="2018" name="Sci. Rep.">
        <title>ATP12A promotes mucus dysfunction during Type 2 airway inflammation.</title>
        <authorList>
            <person name="Lennox A.T."/>
            <person name="Coburn S.L."/>
            <person name="Leech J.A."/>
            <person name="Heidrich E.M."/>
            <person name="Kleyman T.R."/>
            <person name="Wenzel S.E."/>
            <person name="Pilewski J.M."/>
            <person name="Corcoran T.E."/>
            <person name="Myerburg M.M."/>
        </authorList>
    </citation>
    <scope>FUNCTION</scope>
    <scope>TISSUE SPECIFICITY</scope>
    <scope>INDUCTION BY IL13</scope>
</reference>
<sequence>MHQKTPEIYSVELSGTKDIVKTDKGDGKEKYRGLKNNCLELKKKNHKEEFQKELHLDDHKLSNRELEEKYGTDIIMGLSSTRAAELLARDGPNSLTPPKQTPEIVKFLKQMVGGFSILLWVGAFLCWIAYGIQYSSDKSASLNNVYLGCVLGLVVILTGIFAYYQEAKSTNIMSSFNKMIPQQALVIRDSEKKTIPSEQLVVGDIVEVKGGDQIPADIRVLSSQGCRVDNSSLTGESEPQPRSSEFTHENPLETKNICFYSTTCLEGTVTGMVINTGDRTIIGHIASLASGVGNEKTPIAIEIEHFVHIVAGVAVSIGILFFIIAVSLKYQVLDSIIFLIGIIVANVPEGLLATVTVTLSLTAKRMAKKNCLVKNLEAVETLGSTSIICSDKTGTLTQNRMTVAHLWFDNQIFVADTSEDHSNQVFDQSSRTWASLSKIITLCNRAEFKPGQENVPIMKKAVIGDASETALLKFSEVILGDVMEIRKRNRKVAEIPFNSTNKFQLSIHEMDDPHGKRFLMVMKGAPERILEKCSTIMINGEEHPLDKSTAKTFHTAYMELGGLGERVLGFCHLYLPADEFPETYSFDIDAMNFPTSNLCFVGLLSMIDPPRSTVPDAVTKCRSAGIKVIMVTGDHPITAKAIAKSVGIISANSETVEDIAHRLNIAVEQVNKRDAKAAVVTGMELKDMSSEQLDEILANYQEIVFARTSPQQKLIIVEGCQRQDAVVAVTGDGVNDSPALKKADIGIAMGIAGSDAAKNAADMVLLDDNFASIVTGVEEGRLIFDNLKKTIAYSLTKNIAELCPFLIYIIVGLPLPIGTITILFIDLGTDIIPSIALAYEKAESDIMNRKPRHKNKDRLVNQPLAVYSYLHIGLMQALGAFLVYFTVYAQEGFLPRTLINLRVEWEKDYVNDLKDSYGQEWTRYQREYLEWTGYTAFFVGILVQQIADLIIRKTRRNSIFQQGLFRNKVIWVGITSQIIIGLILSYGLGSVTALSFTMLRAQYWFVAVPHAILIWVYDEVRKLFIRLYPGSWWDKNMYY</sequence>
<name>AT12A_HUMAN</name>